<sequence>MAQVPASGKLLVDPRYSTNDQEESILQDIITRFPNVVLMKQTAQLRAMMTIIRDKETPKEEFVFYADRLIRLLIEEALNELPFEKKEVTTPLDVSYHGVSFYSKICGVSIVRAGESMESGLRAVCRGCRIGKILIQRDETTAEPKLIYEKLPADIRDRWVMLLDPMCATAGSVCKAIEVLLRLGVKEERIIFVNILAAPQGIERVFKEYPKVRMVTAAVDICLNSRYYIVPGIGDFGDRYFGTM</sequence>
<keyword id="KW-0002">3D-structure</keyword>
<keyword id="KW-0021">Allosteric enzyme</keyword>
<keyword id="KW-0903">Direct protein sequencing</keyword>
<keyword id="KW-0328">Glycosyltransferase</keyword>
<keyword id="KW-0342">GTP-binding</keyword>
<keyword id="KW-0547">Nucleotide-binding</keyword>
<keyword id="KW-0808">Transferase</keyword>
<protein>
    <recommendedName>
        <fullName>Uracil phosphoribosyltransferase</fullName>
        <shortName>UPRT</shortName>
        <shortName>UPRTase</shortName>
        <ecNumber evidence="1 2">2.4.2.9</ecNumber>
    </recommendedName>
    <alternativeName>
        <fullName>UMP pyrophosphorylase</fullName>
    </alternativeName>
</protein>
<proteinExistence type="evidence at protein level"/>
<gene>
    <name type="primary">uprt</name>
</gene>
<dbReference type="EC" id="2.4.2.9" evidence="1 2"/>
<dbReference type="EMBL" id="U10246">
    <property type="protein sequence ID" value="AAB60213.1"/>
    <property type="molecule type" value="Genomic_DNA"/>
</dbReference>
<dbReference type="PDB" id="1BD3">
    <property type="method" value="X-ray"/>
    <property type="resolution" value="1.93 A"/>
    <property type="chains" value="A/B/C/D=2-244"/>
</dbReference>
<dbReference type="PDB" id="1BD4">
    <property type="method" value="X-ray"/>
    <property type="resolution" value="2.20 A"/>
    <property type="chains" value="A/B/C/D=2-244"/>
</dbReference>
<dbReference type="PDB" id="1JLR">
    <property type="method" value="X-ray"/>
    <property type="resolution" value="2.45 A"/>
    <property type="chains" value="A/B/C/D=2-244"/>
</dbReference>
<dbReference type="PDB" id="1JLS">
    <property type="method" value="X-ray"/>
    <property type="resolution" value="2.50 A"/>
    <property type="chains" value="A/B/C/D=2-244"/>
</dbReference>
<dbReference type="PDB" id="1UPF">
    <property type="method" value="X-ray"/>
    <property type="resolution" value="2.30 A"/>
    <property type="chains" value="A/B/C/D=21-244"/>
</dbReference>
<dbReference type="PDB" id="1UPU">
    <property type="method" value="X-ray"/>
    <property type="resolution" value="2.50 A"/>
    <property type="chains" value="A/B/C/D=21-244"/>
</dbReference>
<dbReference type="PDBsum" id="1BD3"/>
<dbReference type="PDBsum" id="1BD4"/>
<dbReference type="PDBsum" id="1JLR"/>
<dbReference type="PDBsum" id="1JLS"/>
<dbReference type="PDBsum" id="1UPF"/>
<dbReference type="PDBsum" id="1UPU"/>
<dbReference type="SMR" id="Q26998"/>
<dbReference type="EnsemblProtists" id="TGME49_312480-t26_1">
    <property type="protein sequence ID" value="TGME49_312480-t26_1"/>
    <property type="gene ID" value="TGME49_312480"/>
</dbReference>
<dbReference type="VEuPathDB" id="ToxoDB:TGARI_312480"/>
<dbReference type="VEuPathDB" id="ToxoDB:TGCAST_312480"/>
<dbReference type="VEuPathDB" id="ToxoDB:TGCOUG_312480"/>
<dbReference type="VEuPathDB" id="ToxoDB:TGDOM2_312480"/>
<dbReference type="VEuPathDB" id="ToxoDB:TGFOU_312480"/>
<dbReference type="VEuPathDB" id="ToxoDB:TGGT1_312480"/>
<dbReference type="VEuPathDB" id="ToxoDB:TGMAS_312480"/>
<dbReference type="VEuPathDB" id="ToxoDB:TGME49_312480"/>
<dbReference type="VEuPathDB" id="ToxoDB:TGP89_312480"/>
<dbReference type="VEuPathDB" id="ToxoDB:TGPRC2_312480"/>
<dbReference type="VEuPathDB" id="ToxoDB:TGRH88_051740"/>
<dbReference type="VEuPathDB" id="ToxoDB:TGRUB_312480"/>
<dbReference type="VEuPathDB" id="ToxoDB:TGVAND_312480"/>
<dbReference type="VEuPathDB" id="ToxoDB:TGVEG_312480"/>
<dbReference type="OMA" id="KHKIGLM"/>
<dbReference type="BRENDA" id="2.4.2.9">
    <property type="organism ID" value="6411"/>
</dbReference>
<dbReference type="SABIO-RK" id="Q26998"/>
<dbReference type="UniPathway" id="UPA00574">
    <property type="reaction ID" value="UER00636"/>
</dbReference>
<dbReference type="EvolutionaryTrace" id="Q26998"/>
<dbReference type="GO" id="GO:0005525">
    <property type="term" value="F:GTP binding"/>
    <property type="evidence" value="ECO:0007669"/>
    <property type="project" value="UniProtKB-KW"/>
</dbReference>
<dbReference type="GO" id="GO:0004845">
    <property type="term" value="F:uracil phosphoribosyltransferase activity"/>
    <property type="evidence" value="ECO:0007669"/>
    <property type="project" value="UniProtKB-EC"/>
</dbReference>
<dbReference type="GO" id="GO:0044206">
    <property type="term" value="P:UMP salvage"/>
    <property type="evidence" value="ECO:0007669"/>
    <property type="project" value="UniProtKB-UniPathway"/>
</dbReference>
<dbReference type="CDD" id="cd06223">
    <property type="entry name" value="PRTases_typeI"/>
    <property type="match status" value="1"/>
</dbReference>
<dbReference type="FunFam" id="3.40.50.2020:FF:000023">
    <property type="entry name" value="Probable uracil phosphoribosyltransferase"/>
    <property type="match status" value="1"/>
</dbReference>
<dbReference type="Gene3D" id="3.40.50.2020">
    <property type="match status" value="1"/>
</dbReference>
<dbReference type="InterPro" id="IPR000836">
    <property type="entry name" value="PRibTrfase_dom"/>
</dbReference>
<dbReference type="InterPro" id="IPR029057">
    <property type="entry name" value="PRTase-like"/>
</dbReference>
<dbReference type="NCBIfam" id="NF001097">
    <property type="entry name" value="PRK00129.1"/>
    <property type="match status" value="1"/>
</dbReference>
<dbReference type="Pfam" id="PF14681">
    <property type="entry name" value="UPRTase"/>
    <property type="match status" value="1"/>
</dbReference>
<dbReference type="SUPFAM" id="SSF53271">
    <property type="entry name" value="PRTase-like"/>
    <property type="match status" value="1"/>
</dbReference>
<comment type="function">
    <text evidence="2">Catalyzes the conversion of uracil and 5-phospho-alpha-D-ribose 1-diphosphate (PRPP) to UMP and diphosphate.</text>
</comment>
<comment type="catalytic activity">
    <reaction evidence="1 2">
        <text>UMP + diphosphate = 5-phospho-alpha-D-ribose 1-diphosphate + uracil</text>
        <dbReference type="Rhea" id="RHEA:13017"/>
        <dbReference type="ChEBI" id="CHEBI:17568"/>
        <dbReference type="ChEBI" id="CHEBI:33019"/>
        <dbReference type="ChEBI" id="CHEBI:57865"/>
        <dbReference type="ChEBI" id="CHEBI:58017"/>
        <dbReference type="EC" id="2.4.2.9"/>
    </reaction>
</comment>
<comment type="cofactor">
    <cofactor evidence="1">
        <name>Mg(2+)</name>
        <dbReference type="ChEBI" id="CHEBI:18420"/>
    </cofactor>
    <text evidence="1">Binds 1 Mg(2+) ion per subunit. The magnesium is bound as Mg-PRPP.</text>
</comment>
<comment type="activity regulation">
    <text evidence="1">Allosterically activated by GTP. Binding of GTP leads to 5-time activation of the enzyme.</text>
</comment>
<comment type="biophysicochemical properties">
    <kinetics>
        <KM evidence="1 2">3.5 uM for uracil</KM>
        <KM evidence="1 2">216 uM for 5-phospho-alpha-D-ribose 1-diphosphate (in the absence of GTP)</KM>
        <KM evidence="1 2">37.4 uM for 5-phospho-alpha-D-ribose 1-diphosphate (in the presence of GTP)</KM>
        <Vmax evidence="1 2">0.45 umol/min/mg enzyme</Vmax>
    </kinetics>
</comment>
<comment type="pathway">
    <text>Pyrimidine metabolism; UMP biosynthesis via salvage pathway; UMP from uracil: step 1/1.</text>
</comment>
<comment type="subunit">
    <text evidence="1 2">Monomer. Forms homodimers in presence of substrates and homotetramers in the presence of GTP.</text>
</comment>
<comment type="similarity">
    <text evidence="4">Belongs to the UPRTase family.</text>
</comment>
<name>UPP_TOXGO</name>
<accession>Q26998</accession>
<feature type="chain" id="PRO_0000120783" description="Uracil phosphoribosyltransferase">
    <location>
        <begin position="1"/>
        <end position="244"/>
    </location>
</feature>
<feature type="binding site" evidence="3 5 9">
    <location>
        <position position="59"/>
    </location>
    <ligand>
        <name>GTP</name>
        <dbReference type="ChEBI" id="CHEBI:37565"/>
    </ligand>
</feature>
<feature type="binding site" evidence="1 7">
    <location>
        <position position="68"/>
    </location>
    <ligand>
        <name>GTP</name>
        <dbReference type="ChEBI" id="CHEBI:37565"/>
    </ligand>
</feature>
<feature type="binding site" evidence="1 7">
    <location>
        <begin position="102"/>
        <end position="105"/>
    </location>
    <ligand>
        <name>GTP</name>
        <dbReference type="ChEBI" id="CHEBI:37565"/>
    </ligand>
</feature>
<feature type="binding site" evidence="1 8">
    <location>
        <position position="112"/>
    </location>
    <ligand>
        <name>5-phospho-alpha-D-ribose 1-diphosphate</name>
        <dbReference type="ChEBI" id="CHEBI:58017"/>
    </ligand>
</feature>
<feature type="binding site" evidence="1 3 5 6 7 8 9">
    <location>
        <position position="129"/>
    </location>
    <ligand>
        <name>GTP</name>
        <dbReference type="ChEBI" id="CHEBI:37565"/>
    </ligand>
</feature>
<feature type="binding site" evidence="1 3 5 6 7 8 9">
    <location>
        <position position="137"/>
    </location>
    <ligand>
        <name>5-phospho-alpha-D-ribose 1-diphosphate</name>
        <dbReference type="ChEBI" id="CHEBI:58017"/>
    </ligand>
</feature>
<feature type="binding site" evidence="1 3 5 6 7 8 9">
    <location>
        <position position="158"/>
    </location>
    <ligand>
        <name>GTP</name>
        <dbReference type="ChEBI" id="CHEBI:37565"/>
    </ligand>
</feature>
<feature type="binding site" evidence="1 3 5 6 7 8">
    <location>
        <begin position="164"/>
        <end position="172"/>
    </location>
    <ligand>
        <name>5-phospho-alpha-D-ribose 1-diphosphate</name>
        <dbReference type="ChEBI" id="CHEBI:58017"/>
    </ligand>
</feature>
<feature type="binding site" evidence="1 3 8 9">
    <location>
        <position position="164"/>
    </location>
    <ligand>
        <name>5-phospho-alpha-D-ribose 1-diphosphate</name>
        <dbReference type="ChEBI" id="CHEBI:58017"/>
    </ligand>
</feature>
<feature type="binding site" evidence="3 9">
    <location>
        <position position="229"/>
    </location>
    <ligand>
        <name>uracil</name>
        <dbReference type="ChEBI" id="CHEBI:17568"/>
    </ligand>
</feature>
<feature type="binding site" evidence="3 9">
    <location>
        <begin position="234"/>
        <end position="236"/>
    </location>
    <ligand>
        <name>uracil</name>
        <dbReference type="ChEBI" id="CHEBI:17568"/>
    </ligand>
</feature>
<feature type="binding site" evidence="1 7 8">
    <location>
        <position position="235"/>
    </location>
    <ligand>
        <name>5-phospho-alpha-D-ribose 1-diphosphate</name>
        <dbReference type="ChEBI" id="CHEBI:58017"/>
    </ligand>
</feature>
<feature type="mutagenesis site" description="GTP-induced enzymatic activation is reduced 4-fold." evidence="1">
    <original>K</original>
    <variation>A</variation>
    <location>
        <position position="59"/>
    </location>
</feature>
<feature type="mutagenesis site" description="GTP-induced enzymatic activation is reduced 2-fold." evidence="1">
    <original>R</original>
    <variation>A</variation>
    <location>
        <position position="68"/>
    </location>
</feature>
<feature type="mutagenesis site" description="No effect on activity. Far less oxidation sensitive than wild-type." evidence="3">
    <original>C</original>
    <variation>V</variation>
    <location>
        <position position="128"/>
    </location>
</feature>
<feature type="mutagenesis site" description="GTP-induced enzymatic activation is reduced 4-fold." evidence="1">
    <original>K</original>
    <variation>A</variation>
    <location>
        <position position="150"/>
    </location>
</feature>
<feature type="mutagenesis site" description="No enzymatic activity." evidence="1">
    <original>D</original>
    <variation>A</variation>
    <variation>N</variation>
    <location>
        <position position="235"/>
    </location>
</feature>
<feature type="strand" evidence="11">
    <location>
        <begin position="14"/>
        <end position="16"/>
    </location>
</feature>
<feature type="helix" evidence="10">
    <location>
        <begin position="22"/>
        <end position="32"/>
    </location>
</feature>
<feature type="strand" evidence="10">
    <location>
        <begin position="36"/>
        <end position="38"/>
    </location>
</feature>
<feature type="helix" evidence="10">
    <location>
        <begin position="43"/>
        <end position="53"/>
    </location>
</feature>
<feature type="helix" evidence="10">
    <location>
        <begin position="59"/>
        <end position="78"/>
    </location>
</feature>
<feature type="strand" evidence="10">
    <location>
        <begin position="83"/>
        <end position="89"/>
    </location>
</feature>
<feature type="turn" evidence="12">
    <location>
        <begin position="91"/>
        <end position="93"/>
    </location>
</feature>
<feature type="strand" evidence="10">
    <location>
        <begin position="95"/>
        <end position="101"/>
    </location>
</feature>
<feature type="strand" evidence="10">
    <location>
        <begin position="105"/>
        <end position="111"/>
    </location>
</feature>
<feature type="turn" evidence="10">
    <location>
        <begin position="112"/>
        <end position="114"/>
    </location>
</feature>
<feature type="helix" evidence="10">
    <location>
        <begin position="115"/>
        <end position="124"/>
    </location>
</feature>
<feature type="strand" evidence="10">
    <location>
        <begin position="130"/>
        <end position="137"/>
    </location>
</feature>
<feature type="strand" evidence="10">
    <location>
        <begin position="139"/>
        <end position="141"/>
    </location>
</feature>
<feature type="strand" evidence="10">
    <location>
        <begin position="144"/>
        <end position="150"/>
    </location>
</feature>
<feature type="helix" evidence="10">
    <location>
        <begin position="155"/>
        <end position="157"/>
    </location>
</feature>
<feature type="strand" evidence="10">
    <location>
        <begin position="158"/>
        <end position="163"/>
    </location>
</feature>
<feature type="strand" evidence="10">
    <location>
        <begin position="165"/>
        <end position="169"/>
    </location>
</feature>
<feature type="helix" evidence="10">
    <location>
        <begin position="171"/>
        <end position="183"/>
    </location>
</feature>
<feature type="helix" evidence="10">
    <location>
        <begin position="187"/>
        <end position="189"/>
    </location>
</feature>
<feature type="strand" evidence="10">
    <location>
        <begin position="190"/>
        <end position="197"/>
    </location>
</feature>
<feature type="helix" evidence="10">
    <location>
        <begin position="199"/>
        <end position="208"/>
    </location>
</feature>
<feature type="strand" evidence="10">
    <location>
        <begin position="212"/>
        <end position="219"/>
    </location>
</feature>
<feature type="strand" evidence="10">
    <location>
        <begin position="221"/>
        <end position="223"/>
    </location>
</feature>
<feature type="strand" evidence="10">
    <location>
        <begin position="229"/>
        <end position="231"/>
    </location>
</feature>
<feature type="helix" evidence="10">
    <location>
        <begin position="236"/>
        <end position="241"/>
    </location>
</feature>
<evidence type="ECO:0000269" key="1">
    <source>
    </source>
</evidence>
<evidence type="ECO:0000269" key="2">
    <source>
    </source>
</evidence>
<evidence type="ECO:0000269" key="3">
    <source>
    </source>
</evidence>
<evidence type="ECO:0000305" key="4"/>
<evidence type="ECO:0007744" key="5">
    <source>
        <dbReference type="PDB" id="1BD3"/>
    </source>
</evidence>
<evidence type="ECO:0007744" key="6">
    <source>
        <dbReference type="PDB" id="1BD4"/>
    </source>
</evidence>
<evidence type="ECO:0007744" key="7">
    <source>
        <dbReference type="PDB" id="1JLR"/>
    </source>
</evidence>
<evidence type="ECO:0007744" key="8">
    <source>
        <dbReference type="PDB" id="1JLS"/>
    </source>
</evidence>
<evidence type="ECO:0007744" key="9">
    <source>
        <dbReference type="PDB" id="1UPU"/>
    </source>
</evidence>
<evidence type="ECO:0007829" key="10">
    <source>
        <dbReference type="PDB" id="1BD3"/>
    </source>
</evidence>
<evidence type="ECO:0007829" key="11">
    <source>
        <dbReference type="PDB" id="1JLR"/>
    </source>
</evidence>
<evidence type="ECO:0007829" key="12">
    <source>
        <dbReference type="PDB" id="1JLS"/>
    </source>
</evidence>
<organism>
    <name type="scientific">Toxoplasma gondii</name>
    <dbReference type="NCBI Taxonomy" id="5811"/>
    <lineage>
        <taxon>Eukaryota</taxon>
        <taxon>Sar</taxon>
        <taxon>Alveolata</taxon>
        <taxon>Apicomplexa</taxon>
        <taxon>Conoidasida</taxon>
        <taxon>Coccidia</taxon>
        <taxon>Eucoccidiorida</taxon>
        <taxon>Eimeriorina</taxon>
        <taxon>Sarcocystidae</taxon>
        <taxon>Toxoplasma</taxon>
    </lineage>
</organism>
<reference key="1">
    <citation type="journal article" date="1997" name="Mol. Biochem. Parasitol.">
        <title>Expression, purification, and characterization of uracil phosphoribosyltransferase from Toxoplasma gondii.</title>
        <authorList>
            <person name="Carter D."/>
            <person name="Donald R.G.K."/>
            <person name="Roos D."/>
            <person name="Ullman B."/>
        </authorList>
    </citation>
    <scope>NUCLEOTIDE SEQUENCE [GENOMIC DNA]</scope>
    <scope>PROTEIN SEQUENCE OF 2-6</scope>
    <scope>FUNCTION</scope>
    <scope>SUBUNIT</scope>
    <scope>BIOPHYSICOCHEMICAL PROPERTIES</scope>
    <scope>CATALYTIC ACTIVITY</scope>
    <source>
        <strain>RH / EP</strain>
    </source>
</reference>
<reference key="2">
    <citation type="journal article" date="1998" name="EMBO J.">
        <title>Crystal structures of Toxoplasma gondii uracil phosphoribosyltransferase reveal the atomic basis of pyrimidine discrimination and prodrug binding.</title>
        <authorList>
            <person name="Schumacher M.A."/>
            <person name="Carter D."/>
            <person name="Scott D.M."/>
            <person name="Roos D.S."/>
            <person name="Ullman B."/>
            <person name="Brennan R.G."/>
        </authorList>
    </citation>
    <scope>X-RAY CRYSTALLOGRAPHY (1.93 ANGSTROMS) OF MUTANT VAL-128 APOENZYME AND IN COMPLEXES WITH SUBSTRATES AND 5-FLUOROURACIL</scope>
    <scope>MUTAGENESIS OF CYS-128</scope>
</reference>
<reference key="3">
    <citation type="journal article" date="2002" name="Proc. Natl. Acad. Sci. U.S.A.">
        <title>The structural mechanism of GTP stabilized oligomerization and catalytic activation of the Toxoplasma gondii uracil phosphoribosyltransferase.</title>
        <authorList>
            <person name="Schumacher M.A."/>
            <person name="Bashor C.J."/>
            <person name="Song M.H."/>
            <person name="Otsu K."/>
            <person name="Zhu S."/>
            <person name="Parry R.J."/>
            <person name="Ullman B."/>
            <person name="Brennan R.G."/>
        </authorList>
    </citation>
    <scope>X-RAY CRYSTALLOGRAPHY (2.45 ANGSTROMS) OF MUTANT VAL-128 IN COMPLEXES WITH URACIL; SUBSTRATE ANALOG AND GTP</scope>
    <scope>COFACTOR</scope>
    <scope>SUBUNIT</scope>
    <scope>BIOPHYSICOCHEMICAL PROPERTIES</scope>
    <scope>ACTIVITY REGULATION</scope>
    <scope>MUTAGENESIS OF LYS-59; ARG-68; LYS-150 AND ASP-235</scope>
    <scope>CATALYTIC ACTIVITY</scope>
</reference>